<accession>C1CMZ0</accession>
<protein>
    <recommendedName>
        <fullName evidence="1">Acetate kinase</fullName>
        <ecNumber evidence="1">2.7.2.1</ecNumber>
    </recommendedName>
    <alternativeName>
        <fullName evidence="1">Acetokinase</fullName>
    </alternativeName>
</protein>
<reference key="1">
    <citation type="journal article" date="2010" name="Genome Biol.">
        <title>Structure and dynamics of the pan-genome of Streptococcus pneumoniae and closely related species.</title>
        <authorList>
            <person name="Donati C."/>
            <person name="Hiller N.L."/>
            <person name="Tettelin H."/>
            <person name="Muzzi A."/>
            <person name="Croucher N.J."/>
            <person name="Angiuoli S.V."/>
            <person name="Oggioni M."/>
            <person name="Dunning Hotopp J.C."/>
            <person name="Hu F.Z."/>
            <person name="Riley D.R."/>
            <person name="Covacci A."/>
            <person name="Mitchell T.J."/>
            <person name="Bentley S.D."/>
            <person name="Kilian M."/>
            <person name="Ehrlich G.D."/>
            <person name="Rappuoli R."/>
            <person name="Moxon E.R."/>
            <person name="Masignani V."/>
        </authorList>
    </citation>
    <scope>NUCLEOTIDE SEQUENCE [LARGE SCALE GENOMIC DNA]</scope>
    <source>
        <strain>P1031</strain>
    </source>
</reference>
<name>ACKA_STRZP</name>
<feature type="chain" id="PRO_1000116814" description="Acetate kinase">
    <location>
        <begin position="1"/>
        <end position="396"/>
    </location>
</feature>
<feature type="active site" description="Proton donor/acceptor" evidence="1">
    <location>
        <position position="146"/>
    </location>
</feature>
<feature type="binding site" evidence="1">
    <location>
        <position position="8"/>
    </location>
    <ligand>
        <name>Mg(2+)</name>
        <dbReference type="ChEBI" id="CHEBI:18420"/>
    </ligand>
</feature>
<feature type="binding site" evidence="1">
    <location>
        <position position="15"/>
    </location>
    <ligand>
        <name>ATP</name>
        <dbReference type="ChEBI" id="CHEBI:30616"/>
    </ligand>
</feature>
<feature type="binding site" evidence="1">
    <location>
        <position position="89"/>
    </location>
    <ligand>
        <name>substrate</name>
    </ligand>
</feature>
<feature type="binding site" evidence="1">
    <location>
        <begin position="206"/>
        <end position="210"/>
    </location>
    <ligand>
        <name>ATP</name>
        <dbReference type="ChEBI" id="CHEBI:30616"/>
    </ligand>
</feature>
<feature type="binding site" evidence="1">
    <location>
        <begin position="283"/>
        <end position="285"/>
    </location>
    <ligand>
        <name>ATP</name>
        <dbReference type="ChEBI" id="CHEBI:30616"/>
    </ligand>
</feature>
<feature type="binding site" evidence="1">
    <location>
        <begin position="331"/>
        <end position="335"/>
    </location>
    <ligand>
        <name>ATP</name>
        <dbReference type="ChEBI" id="CHEBI:30616"/>
    </ligand>
</feature>
<feature type="binding site" evidence="1">
    <location>
        <position position="383"/>
    </location>
    <ligand>
        <name>Mg(2+)</name>
        <dbReference type="ChEBI" id="CHEBI:18420"/>
    </ligand>
</feature>
<feature type="site" description="Transition state stabilizer" evidence="1">
    <location>
        <position position="178"/>
    </location>
</feature>
<feature type="site" description="Transition state stabilizer" evidence="1">
    <location>
        <position position="239"/>
    </location>
</feature>
<keyword id="KW-0067">ATP-binding</keyword>
<keyword id="KW-0963">Cytoplasm</keyword>
<keyword id="KW-0418">Kinase</keyword>
<keyword id="KW-0460">Magnesium</keyword>
<keyword id="KW-0479">Metal-binding</keyword>
<keyword id="KW-0547">Nucleotide-binding</keyword>
<keyword id="KW-0808">Transferase</keyword>
<sequence length="396" mass="43330">MTKTIAINAGSSSLKWQLYLMPEEKVLAKGLIERIGLKDSISTVKFDGRSEQQILDIENHTQAVKILLDDLIRFDIIKAYDEITGVGHRVVAGGEYFKESTVVEGDVLEKVEELSLLAPLHNPANAAGVRAFKELLPDITSVVVFDTSFHTSMPEKAYRYPLPTKYYTENKVRKYGAHGTSHQFVAGEAAKLLGRPLEDLKLITCHIGNGGSITAVKAGKSVDTSMGFTPLGGIMMGTRTGDIDPAIIPYLMQYTEDFNTPEDISRVLNRESGLLGVSANSSDMRDIEAAVAEGNHEASLAYEMYVDRIQKHIGQYLAVLNGADAIVFTAGVGENAESFRRDVISGISWFGCDVDDEKNVFGVTGDISTEAAKIRVLVIPTDEELVIARDVERLKK</sequence>
<comment type="function">
    <text evidence="1">Catalyzes the formation of acetyl phosphate from acetate and ATP. Can also catalyze the reverse reaction.</text>
</comment>
<comment type="catalytic activity">
    <reaction evidence="1">
        <text>acetate + ATP = acetyl phosphate + ADP</text>
        <dbReference type="Rhea" id="RHEA:11352"/>
        <dbReference type="ChEBI" id="CHEBI:22191"/>
        <dbReference type="ChEBI" id="CHEBI:30089"/>
        <dbReference type="ChEBI" id="CHEBI:30616"/>
        <dbReference type="ChEBI" id="CHEBI:456216"/>
        <dbReference type="EC" id="2.7.2.1"/>
    </reaction>
</comment>
<comment type="cofactor">
    <cofactor evidence="1">
        <name>Mg(2+)</name>
        <dbReference type="ChEBI" id="CHEBI:18420"/>
    </cofactor>
    <cofactor evidence="1">
        <name>Mn(2+)</name>
        <dbReference type="ChEBI" id="CHEBI:29035"/>
    </cofactor>
    <text evidence="1">Mg(2+). Can also accept Mn(2+).</text>
</comment>
<comment type="pathway">
    <text evidence="1">Metabolic intermediate biosynthesis; acetyl-CoA biosynthesis; acetyl-CoA from acetate: step 1/2.</text>
</comment>
<comment type="subunit">
    <text evidence="1">Homodimer.</text>
</comment>
<comment type="subcellular location">
    <subcellularLocation>
        <location evidence="1">Cytoplasm</location>
    </subcellularLocation>
</comment>
<comment type="similarity">
    <text evidence="1">Belongs to the acetokinase family.</text>
</comment>
<dbReference type="EC" id="2.7.2.1" evidence="1"/>
<dbReference type="EMBL" id="CP000920">
    <property type="protein sequence ID" value="ACO20722.1"/>
    <property type="molecule type" value="Genomic_DNA"/>
</dbReference>
<dbReference type="RefSeq" id="WP_000167766.1">
    <property type="nucleotide sequence ID" value="NC_012467.1"/>
</dbReference>
<dbReference type="SMR" id="C1CMZ0"/>
<dbReference type="KEGG" id="spp:SPP_2080"/>
<dbReference type="HOGENOM" id="CLU_020352_0_1_9"/>
<dbReference type="UniPathway" id="UPA00340">
    <property type="reaction ID" value="UER00458"/>
</dbReference>
<dbReference type="GO" id="GO:0005737">
    <property type="term" value="C:cytoplasm"/>
    <property type="evidence" value="ECO:0007669"/>
    <property type="project" value="UniProtKB-SubCell"/>
</dbReference>
<dbReference type="GO" id="GO:0008776">
    <property type="term" value="F:acetate kinase activity"/>
    <property type="evidence" value="ECO:0007669"/>
    <property type="project" value="UniProtKB-UniRule"/>
</dbReference>
<dbReference type="GO" id="GO:0005524">
    <property type="term" value="F:ATP binding"/>
    <property type="evidence" value="ECO:0007669"/>
    <property type="project" value="UniProtKB-KW"/>
</dbReference>
<dbReference type="GO" id="GO:0000287">
    <property type="term" value="F:magnesium ion binding"/>
    <property type="evidence" value="ECO:0007669"/>
    <property type="project" value="UniProtKB-UniRule"/>
</dbReference>
<dbReference type="GO" id="GO:0006083">
    <property type="term" value="P:acetate metabolic process"/>
    <property type="evidence" value="ECO:0007669"/>
    <property type="project" value="TreeGrafter"/>
</dbReference>
<dbReference type="GO" id="GO:0006085">
    <property type="term" value="P:acetyl-CoA biosynthetic process"/>
    <property type="evidence" value="ECO:0007669"/>
    <property type="project" value="UniProtKB-UniRule"/>
</dbReference>
<dbReference type="CDD" id="cd24010">
    <property type="entry name" value="ASKHA_NBD_AcK_PK"/>
    <property type="match status" value="1"/>
</dbReference>
<dbReference type="Gene3D" id="3.30.420.40">
    <property type="match status" value="2"/>
</dbReference>
<dbReference type="HAMAP" id="MF_00020">
    <property type="entry name" value="Acetate_kinase"/>
    <property type="match status" value="1"/>
</dbReference>
<dbReference type="InterPro" id="IPR004372">
    <property type="entry name" value="Ac/propionate_kinase"/>
</dbReference>
<dbReference type="InterPro" id="IPR000890">
    <property type="entry name" value="Aliphatic_acid_kin_short-chain"/>
</dbReference>
<dbReference type="InterPro" id="IPR023865">
    <property type="entry name" value="Aliphatic_acid_kinase_CS"/>
</dbReference>
<dbReference type="InterPro" id="IPR043129">
    <property type="entry name" value="ATPase_NBD"/>
</dbReference>
<dbReference type="NCBIfam" id="TIGR00016">
    <property type="entry name" value="ackA"/>
    <property type="match status" value="1"/>
</dbReference>
<dbReference type="PANTHER" id="PTHR21060">
    <property type="entry name" value="ACETATE KINASE"/>
    <property type="match status" value="1"/>
</dbReference>
<dbReference type="PANTHER" id="PTHR21060:SF15">
    <property type="entry name" value="ACETATE KINASE-RELATED"/>
    <property type="match status" value="1"/>
</dbReference>
<dbReference type="Pfam" id="PF00871">
    <property type="entry name" value="Acetate_kinase"/>
    <property type="match status" value="1"/>
</dbReference>
<dbReference type="PIRSF" id="PIRSF000722">
    <property type="entry name" value="Acetate_prop_kin"/>
    <property type="match status" value="1"/>
</dbReference>
<dbReference type="PRINTS" id="PR00471">
    <property type="entry name" value="ACETATEKNASE"/>
</dbReference>
<dbReference type="SUPFAM" id="SSF53067">
    <property type="entry name" value="Actin-like ATPase domain"/>
    <property type="match status" value="2"/>
</dbReference>
<dbReference type="PROSITE" id="PS01075">
    <property type="entry name" value="ACETATE_KINASE_1"/>
    <property type="match status" value="1"/>
</dbReference>
<dbReference type="PROSITE" id="PS01076">
    <property type="entry name" value="ACETATE_KINASE_2"/>
    <property type="match status" value="1"/>
</dbReference>
<gene>
    <name evidence="1" type="primary">ackA</name>
    <name type="ordered locus">SPP_2080</name>
</gene>
<organism>
    <name type="scientific">Streptococcus pneumoniae (strain P1031)</name>
    <dbReference type="NCBI Taxonomy" id="488223"/>
    <lineage>
        <taxon>Bacteria</taxon>
        <taxon>Bacillati</taxon>
        <taxon>Bacillota</taxon>
        <taxon>Bacilli</taxon>
        <taxon>Lactobacillales</taxon>
        <taxon>Streptococcaceae</taxon>
        <taxon>Streptococcus</taxon>
    </lineage>
</organism>
<proteinExistence type="inferred from homology"/>
<evidence type="ECO:0000255" key="1">
    <source>
        <dbReference type="HAMAP-Rule" id="MF_00020"/>
    </source>
</evidence>